<gene>
    <name type="primary">MT-CYB</name>
    <name type="synonym">COB</name>
    <name type="synonym">CYTB</name>
    <name type="synonym">MTCYB</name>
</gene>
<dbReference type="EMBL" id="AY347753">
    <property type="protein sequence ID" value="AAQ79838.1"/>
    <property type="molecule type" value="Genomic_DNA"/>
</dbReference>
<dbReference type="SMR" id="Q6V8Y0"/>
<dbReference type="GO" id="GO:0005743">
    <property type="term" value="C:mitochondrial inner membrane"/>
    <property type="evidence" value="ECO:0007669"/>
    <property type="project" value="UniProtKB-SubCell"/>
</dbReference>
<dbReference type="GO" id="GO:0045275">
    <property type="term" value="C:respiratory chain complex III"/>
    <property type="evidence" value="ECO:0007669"/>
    <property type="project" value="InterPro"/>
</dbReference>
<dbReference type="GO" id="GO:0046872">
    <property type="term" value="F:metal ion binding"/>
    <property type="evidence" value="ECO:0007669"/>
    <property type="project" value="UniProtKB-KW"/>
</dbReference>
<dbReference type="GO" id="GO:0008121">
    <property type="term" value="F:ubiquinol-cytochrome-c reductase activity"/>
    <property type="evidence" value="ECO:0007669"/>
    <property type="project" value="InterPro"/>
</dbReference>
<dbReference type="GO" id="GO:0006122">
    <property type="term" value="P:mitochondrial electron transport, ubiquinol to cytochrome c"/>
    <property type="evidence" value="ECO:0007669"/>
    <property type="project" value="TreeGrafter"/>
</dbReference>
<dbReference type="CDD" id="cd00290">
    <property type="entry name" value="cytochrome_b_C"/>
    <property type="match status" value="1"/>
</dbReference>
<dbReference type="CDD" id="cd00284">
    <property type="entry name" value="Cytochrome_b_N"/>
    <property type="match status" value="1"/>
</dbReference>
<dbReference type="FunFam" id="1.20.810.10:FF:000002">
    <property type="entry name" value="Cytochrome b"/>
    <property type="match status" value="1"/>
</dbReference>
<dbReference type="Gene3D" id="1.20.810.10">
    <property type="entry name" value="Cytochrome Bc1 Complex, Chain C"/>
    <property type="match status" value="1"/>
</dbReference>
<dbReference type="InterPro" id="IPR005798">
    <property type="entry name" value="Cyt_b/b6_C"/>
</dbReference>
<dbReference type="InterPro" id="IPR036150">
    <property type="entry name" value="Cyt_b/b6_C_sf"/>
</dbReference>
<dbReference type="InterPro" id="IPR005797">
    <property type="entry name" value="Cyt_b/b6_N"/>
</dbReference>
<dbReference type="InterPro" id="IPR027387">
    <property type="entry name" value="Cytb/b6-like_sf"/>
</dbReference>
<dbReference type="InterPro" id="IPR030689">
    <property type="entry name" value="Cytochrome_b"/>
</dbReference>
<dbReference type="InterPro" id="IPR048260">
    <property type="entry name" value="Cytochrome_b_C_euk/bac"/>
</dbReference>
<dbReference type="InterPro" id="IPR048259">
    <property type="entry name" value="Cytochrome_b_N_euk/bac"/>
</dbReference>
<dbReference type="InterPro" id="IPR016174">
    <property type="entry name" value="Di-haem_cyt_TM"/>
</dbReference>
<dbReference type="PANTHER" id="PTHR19271">
    <property type="entry name" value="CYTOCHROME B"/>
    <property type="match status" value="1"/>
</dbReference>
<dbReference type="PANTHER" id="PTHR19271:SF16">
    <property type="entry name" value="CYTOCHROME B"/>
    <property type="match status" value="1"/>
</dbReference>
<dbReference type="Pfam" id="PF00032">
    <property type="entry name" value="Cytochrom_B_C"/>
    <property type="match status" value="1"/>
</dbReference>
<dbReference type="Pfam" id="PF00033">
    <property type="entry name" value="Cytochrome_B"/>
    <property type="match status" value="1"/>
</dbReference>
<dbReference type="PIRSF" id="PIRSF038885">
    <property type="entry name" value="COB"/>
    <property type="match status" value="1"/>
</dbReference>
<dbReference type="SUPFAM" id="SSF81648">
    <property type="entry name" value="a domain/subunit of cytochrome bc1 complex (Ubiquinol-cytochrome c reductase)"/>
    <property type="match status" value="1"/>
</dbReference>
<dbReference type="SUPFAM" id="SSF81342">
    <property type="entry name" value="Transmembrane di-heme cytochromes"/>
    <property type="match status" value="1"/>
</dbReference>
<dbReference type="PROSITE" id="PS51003">
    <property type="entry name" value="CYTB_CTER"/>
    <property type="match status" value="1"/>
</dbReference>
<dbReference type="PROSITE" id="PS51002">
    <property type="entry name" value="CYTB_NTER"/>
    <property type="match status" value="1"/>
</dbReference>
<name>CYB_CEREN</name>
<organism>
    <name type="scientific">Cervus elaphus nelsoni</name>
    <name type="common">Rocky Mountain elk</name>
    <name type="synonym">Cervus canadensis nelsoni</name>
    <dbReference type="NCBI Taxonomy" id="9864"/>
    <lineage>
        <taxon>Eukaryota</taxon>
        <taxon>Metazoa</taxon>
        <taxon>Chordata</taxon>
        <taxon>Craniata</taxon>
        <taxon>Vertebrata</taxon>
        <taxon>Euteleostomi</taxon>
        <taxon>Mammalia</taxon>
        <taxon>Eutheria</taxon>
        <taxon>Laurasiatheria</taxon>
        <taxon>Artiodactyla</taxon>
        <taxon>Ruminantia</taxon>
        <taxon>Pecora</taxon>
        <taxon>Cervidae</taxon>
        <taxon>Cervinae</taxon>
        <taxon>Cervus</taxon>
    </lineage>
</organism>
<feature type="chain" id="PRO_0000254787" description="Cytochrome b">
    <location>
        <begin position="1"/>
        <end position="379"/>
    </location>
</feature>
<feature type="transmembrane region" description="Helical" evidence="2">
    <location>
        <begin position="33"/>
        <end position="53"/>
    </location>
</feature>
<feature type="transmembrane region" description="Helical" evidence="2">
    <location>
        <begin position="77"/>
        <end position="98"/>
    </location>
</feature>
<feature type="transmembrane region" description="Helical" evidence="2">
    <location>
        <begin position="113"/>
        <end position="133"/>
    </location>
</feature>
<feature type="transmembrane region" description="Helical" evidence="2">
    <location>
        <begin position="178"/>
        <end position="198"/>
    </location>
</feature>
<feature type="transmembrane region" description="Helical" evidence="2">
    <location>
        <begin position="226"/>
        <end position="246"/>
    </location>
</feature>
<feature type="transmembrane region" description="Helical" evidence="2">
    <location>
        <begin position="288"/>
        <end position="308"/>
    </location>
</feature>
<feature type="transmembrane region" description="Helical" evidence="2">
    <location>
        <begin position="320"/>
        <end position="340"/>
    </location>
</feature>
<feature type="transmembrane region" description="Helical" evidence="2">
    <location>
        <begin position="347"/>
        <end position="367"/>
    </location>
</feature>
<feature type="binding site" description="axial binding residue" evidence="2">
    <location>
        <position position="83"/>
    </location>
    <ligand>
        <name>heme b</name>
        <dbReference type="ChEBI" id="CHEBI:60344"/>
        <label>b562</label>
    </ligand>
    <ligandPart>
        <name>Fe</name>
        <dbReference type="ChEBI" id="CHEBI:18248"/>
    </ligandPart>
</feature>
<feature type="binding site" description="axial binding residue" evidence="2">
    <location>
        <position position="97"/>
    </location>
    <ligand>
        <name>heme b</name>
        <dbReference type="ChEBI" id="CHEBI:60344"/>
        <label>b566</label>
    </ligand>
    <ligandPart>
        <name>Fe</name>
        <dbReference type="ChEBI" id="CHEBI:18248"/>
    </ligandPart>
</feature>
<feature type="binding site" description="axial binding residue" evidence="2">
    <location>
        <position position="182"/>
    </location>
    <ligand>
        <name>heme b</name>
        <dbReference type="ChEBI" id="CHEBI:60344"/>
        <label>b562</label>
    </ligand>
    <ligandPart>
        <name>Fe</name>
        <dbReference type="ChEBI" id="CHEBI:18248"/>
    </ligandPart>
</feature>
<feature type="binding site" description="axial binding residue" evidence="2">
    <location>
        <position position="196"/>
    </location>
    <ligand>
        <name>heme b</name>
        <dbReference type="ChEBI" id="CHEBI:60344"/>
        <label>b566</label>
    </ligand>
    <ligandPart>
        <name>Fe</name>
        <dbReference type="ChEBI" id="CHEBI:18248"/>
    </ligandPart>
</feature>
<feature type="binding site" evidence="2">
    <location>
        <position position="201"/>
    </location>
    <ligand>
        <name>a ubiquinone</name>
        <dbReference type="ChEBI" id="CHEBI:16389"/>
    </ligand>
</feature>
<proteinExistence type="inferred from homology"/>
<geneLocation type="mitochondrion"/>
<comment type="function">
    <text evidence="2">Component of the ubiquinol-cytochrome c reductase complex (complex III or cytochrome b-c1 complex) that is part of the mitochondrial respiratory chain. The b-c1 complex mediates electron transfer from ubiquinol to cytochrome c. Contributes to the generation of a proton gradient across the mitochondrial membrane that is then used for ATP synthesis.</text>
</comment>
<comment type="cofactor">
    <cofactor evidence="2">
        <name>heme b</name>
        <dbReference type="ChEBI" id="CHEBI:60344"/>
    </cofactor>
    <text evidence="2">Binds 2 heme b groups non-covalently.</text>
</comment>
<comment type="subunit">
    <text evidence="2">The cytochrome bc1 complex contains 11 subunits: 3 respiratory subunits (MT-CYB, CYC1 and UQCRFS1), 2 core proteins (UQCRC1 and UQCRC2) and 6 low-molecular weight proteins (UQCRH/QCR6, UQCRB/QCR7, UQCRQ/QCR8, UQCR10/QCR9, UQCR11/QCR10 and a cleavage product of UQCRFS1). This cytochrome bc1 complex then forms a dimer.</text>
</comment>
<comment type="subcellular location">
    <subcellularLocation>
        <location evidence="2">Mitochondrion inner membrane</location>
        <topology evidence="2">Multi-pass membrane protein</topology>
    </subcellularLocation>
</comment>
<comment type="miscellaneous">
    <text evidence="1">Heme 1 (or BL or b562) is low-potential and absorbs at about 562 nm, and heme 2 (or BH or b566) is high-potential and absorbs at about 566 nm.</text>
</comment>
<comment type="similarity">
    <text evidence="3 4">Belongs to the cytochrome b family.</text>
</comment>
<comment type="caution">
    <text evidence="2">The full-length protein contains only eight transmembrane helices, not nine as predicted by bioinformatics tools.</text>
</comment>
<reference key="1">
    <citation type="submission" date="2003-07" db="EMBL/GenBank/DDBJ databases">
        <title>Phylogeny of Cervidae based on mitochondrial genes.</title>
        <authorList>
            <person name="Ludt C.J."/>
            <person name="Kuehn R."/>
            <person name="Schroeder W."/>
            <person name="Rottmann O."/>
        </authorList>
    </citation>
    <scope>NUCLEOTIDE SEQUENCE [GENOMIC DNA]</scope>
    <source>
        <tissue>Spongiosa bone</tissue>
    </source>
</reference>
<keyword id="KW-0249">Electron transport</keyword>
<keyword id="KW-0349">Heme</keyword>
<keyword id="KW-0408">Iron</keyword>
<keyword id="KW-0472">Membrane</keyword>
<keyword id="KW-0479">Metal-binding</keyword>
<keyword id="KW-0496">Mitochondrion</keyword>
<keyword id="KW-0999">Mitochondrion inner membrane</keyword>
<keyword id="KW-0679">Respiratory chain</keyword>
<keyword id="KW-0812">Transmembrane</keyword>
<keyword id="KW-1133">Transmembrane helix</keyword>
<keyword id="KW-0813">Transport</keyword>
<keyword id="KW-0830">Ubiquinone</keyword>
<protein>
    <recommendedName>
        <fullName>Cytochrome b</fullName>
    </recommendedName>
    <alternativeName>
        <fullName>Complex III subunit 3</fullName>
    </alternativeName>
    <alternativeName>
        <fullName>Complex III subunit III</fullName>
    </alternativeName>
    <alternativeName>
        <fullName>Cytochrome b-c1 complex subunit 3</fullName>
    </alternativeName>
    <alternativeName>
        <fullName>Ubiquinol-cytochrome-c reductase complex cytochrome b subunit</fullName>
    </alternativeName>
</protein>
<sequence>MINTRKTHPLMKIVNNAFIDLPAPSNISSWWNFGSLLGICLILQILTGLFLAMHYTSDTMTAFSSVTHICRDVNYGWIIRYMHANGASMFFICLFMHVGRGLYYGSYTFLETWNIGVILLFTVMATAFVGYVLPWGQMSFWGATVITNLLSAIPYIGTNLVEWIWGGFSVDKATLTRFFAFHFILPFIIAALAMVHLLFLHETGSNNPTGIPSDADKIPFHPYYTIKDILGILLLVLFLMLLVLFAPDLLGDPDNYTPGNPLNTPPHIKPEWYFLFAYAILRSIPNKLGGVLALISSILILILMPLLHTSKQRSMMFRPFSQCLFWILVADLLTLTWIGGQPVEYPFIIIGQLASILYFFIILVLMPITSTIENNLLKW</sequence>
<evidence type="ECO:0000250" key="1"/>
<evidence type="ECO:0000250" key="2">
    <source>
        <dbReference type="UniProtKB" id="P00157"/>
    </source>
</evidence>
<evidence type="ECO:0000255" key="3">
    <source>
        <dbReference type="PROSITE-ProRule" id="PRU00967"/>
    </source>
</evidence>
<evidence type="ECO:0000255" key="4">
    <source>
        <dbReference type="PROSITE-ProRule" id="PRU00968"/>
    </source>
</evidence>
<accession>Q6V8Y0</accession>